<sequence>MKKILILLIRFYQKFISPMFPAKCRFYPTCSQYTLEAIKEHGTIKGTYLAIRRILKCHPFHEGGYDPVPKRKNKNSEGKREE</sequence>
<feature type="chain" id="PRO_0000171825" description="Putative membrane protein insertion efficiency factor">
    <location>
        <begin position="1"/>
        <end position="82"/>
    </location>
</feature>
<feature type="region of interest" description="Disordered" evidence="2">
    <location>
        <begin position="61"/>
        <end position="82"/>
    </location>
</feature>
<keyword id="KW-0997">Cell inner membrane</keyword>
<keyword id="KW-1003">Cell membrane</keyword>
<keyword id="KW-0472">Membrane</keyword>
<keyword id="KW-1185">Reference proteome</keyword>
<name>YIDD_FUSNN</name>
<reference key="1">
    <citation type="journal article" date="2002" name="J. Bacteriol.">
        <title>Genome sequence and analysis of the oral bacterium Fusobacterium nucleatum strain ATCC 25586.</title>
        <authorList>
            <person name="Kapatral V."/>
            <person name="Anderson I."/>
            <person name="Ivanova N."/>
            <person name="Reznik G."/>
            <person name="Los T."/>
            <person name="Lykidis A."/>
            <person name="Bhattacharyya A."/>
            <person name="Bartman A."/>
            <person name="Gardner W."/>
            <person name="Grechkin G."/>
            <person name="Zhu L."/>
            <person name="Vasieva O."/>
            <person name="Chu L."/>
            <person name="Kogan Y."/>
            <person name="Chaga O."/>
            <person name="Goltsman E."/>
            <person name="Bernal A."/>
            <person name="Larsen N."/>
            <person name="D'Souza M."/>
            <person name="Walunas T."/>
            <person name="Pusch G."/>
            <person name="Haselkorn R."/>
            <person name="Fonstein M."/>
            <person name="Kyrpides N.C."/>
            <person name="Overbeek R."/>
        </authorList>
    </citation>
    <scope>NUCLEOTIDE SEQUENCE [LARGE SCALE GENOMIC DNA]</scope>
    <source>
        <strain>ATCC 25586 / DSM 15643 / BCRC 10681 / CIP 101130 / JCM 8532 / KCTC 2640 / LMG 13131 / VPI 4355</strain>
    </source>
</reference>
<accession>Q8RHA5</accession>
<proteinExistence type="inferred from homology"/>
<gene>
    <name type="ordered locus">FN0003</name>
</gene>
<dbReference type="EMBL" id="AE009951">
    <property type="protein sequence ID" value="AAL94216.1"/>
    <property type="molecule type" value="Genomic_DNA"/>
</dbReference>
<dbReference type="RefSeq" id="NP_602917.1">
    <property type="nucleotide sequence ID" value="NC_003454.1"/>
</dbReference>
<dbReference type="RefSeq" id="WP_011016065.1">
    <property type="nucleotide sequence ID" value="NZ_CP028101.1"/>
</dbReference>
<dbReference type="FunCoup" id="Q8RHA5">
    <property type="interactions" value="237"/>
</dbReference>
<dbReference type="STRING" id="190304.FN0003"/>
<dbReference type="PaxDb" id="190304-FN0003"/>
<dbReference type="EnsemblBacteria" id="AAL94216">
    <property type="protein sequence ID" value="AAL94216"/>
    <property type="gene ID" value="FN0003"/>
</dbReference>
<dbReference type="GeneID" id="79782864"/>
<dbReference type="KEGG" id="fnu:FN0003"/>
<dbReference type="PATRIC" id="fig|190304.8.peg.595"/>
<dbReference type="eggNOG" id="COG0759">
    <property type="taxonomic scope" value="Bacteria"/>
</dbReference>
<dbReference type="HOGENOM" id="CLU_144811_6_0_0"/>
<dbReference type="InParanoid" id="Q8RHA5"/>
<dbReference type="BioCyc" id="FNUC190304:G1FZS-617-MONOMER"/>
<dbReference type="Proteomes" id="UP000002521">
    <property type="component" value="Chromosome"/>
</dbReference>
<dbReference type="GO" id="GO:0005886">
    <property type="term" value="C:plasma membrane"/>
    <property type="evidence" value="ECO:0007669"/>
    <property type="project" value="UniProtKB-SubCell"/>
</dbReference>
<dbReference type="HAMAP" id="MF_00386">
    <property type="entry name" value="UPF0161_YidD"/>
    <property type="match status" value="1"/>
</dbReference>
<dbReference type="InterPro" id="IPR002696">
    <property type="entry name" value="Membr_insert_effic_factor_YidD"/>
</dbReference>
<dbReference type="NCBIfam" id="TIGR00278">
    <property type="entry name" value="membrane protein insertion efficiency factor YidD"/>
    <property type="match status" value="1"/>
</dbReference>
<dbReference type="PANTHER" id="PTHR33383">
    <property type="entry name" value="MEMBRANE PROTEIN INSERTION EFFICIENCY FACTOR-RELATED"/>
    <property type="match status" value="1"/>
</dbReference>
<dbReference type="PANTHER" id="PTHR33383:SF1">
    <property type="entry name" value="MEMBRANE PROTEIN INSERTION EFFICIENCY FACTOR-RELATED"/>
    <property type="match status" value="1"/>
</dbReference>
<dbReference type="Pfam" id="PF01809">
    <property type="entry name" value="YidD"/>
    <property type="match status" value="1"/>
</dbReference>
<dbReference type="SMART" id="SM01234">
    <property type="entry name" value="Haemolytic"/>
    <property type="match status" value="1"/>
</dbReference>
<organism>
    <name type="scientific">Fusobacterium nucleatum subsp. nucleatum (strain ATCC 25586 / DSM 15643 / BCRC 10681 / CIP 101130 / JCM 8532 / KCTC 2640 / LMG 13131 / VPI 4355)</name>
    <dbReference type="NCBI Taxonomy" id="190304"/>
    <lineage>
        <taxon>Bacteria</taxon>
        <taxon>Fusobacteriati</taxon>
        <taxon>Fusobacteriota</taxon>
        <taxon>Fusobacteriia</taxon>
        <taxon>Fusobacteriales</taxon>
        <taxon>Fusobacteriaceae</taxon>
        <taxon>Fusobacterium</taxon>
    </lineage>
</organism>
<protein>
    <recommendedName>
        <fullName evidence="1">Putative membrane protein insertion efficiency factor</fullName>
    </recommendedName>
</protein>
<comment type="function">
    <text evidence="1">Could be involved in insertion of integral membrane proteins into the membrane.</text>
</comment>
<comment type="subcellular location">
    <subcellularLocation>
        <location evidence="1">Cell inner membrane</location>
        <topology evidence="1">Peripheral membrane protein</topology>
        <orientation evidence="1">Cytoplasmic side</orientation>
    </subcellularLocation>
</comment>
<comment type="similarity">
    <text evidence="1">Belongs to the UPF0161 family.</text>
</comment>
<evidence type="ECO:0000255" key="1">
    <source>
        <dbReference type="HAMAP-Rule" id="MF_00386"/>
    </source>
</evidence>
<evidence type="ECO:0000256" key="2">
    <source>
        <dbReference type="SAM" id="MobiDB-lite"/>
    </source>
</evidence>